<dbReference type="EMBL" id="U15974">
    <property type="protein sequence ID" value="AAA69929.1"/>
    <property type="molecule type" value="mRNA"/>
</dbReference>
<dbReference type="EMBL" id="AE014296">
    <property type="protein sequence ID" value="AAF50008.1"/>
    <property type="molecule type" value="Genomic_DNA"/>
</dbReference>
<dbReference type="EMBL" id="AY051583">
    <property type="protein sequence ID" value="AAK93007.1"/>
    <property type="molecule type" value="mRNA"/>
</dbReference>
<dbReference type="EMBL" id="M74431">
    <property type="protein sequence ID" value="AAA28658.1"/>
    <property type="molecule type" value="Genomic_DNA"/>
</dbReference>
<dbReference type="PIR" id="A55236">
    <property type="entry name" value="A55236"/>
</dbReference>
<dbReference type="RefSeq" id="NP_001261726.1">
    <property type="nucleotide sequence ID" value="NM_001274797.1"/>
</dbReference>
<dbReference type="RefSeq" id="NP_524029.2">
    <property type="nucleotide sequence ID" value="NM_079305.3"/>
</dbReference>
<dbReference type="SMR" id="P46867"/>
<dbReference type="BioGRID" id="64693">
    <property type="interactions" value="8"/>
</dbReference>
<dbReference type="FunCoup" id="P46867">
    <property type="interactions" value="16"/>
</dbReference>
<dbReference type="IntAct" id="P46867">
    <property type="interactions" value="1"/>
</dbReference>
<dbReference type="STRING" id="7227.FBpp0075762"/>
<dbReference type="PaxDb" id="7227-FBpp0075762"/>
<dbReference type="DNASU" id="39332"/>
<dbReference type="EnsemblMetazoa" id="FBtr0076030">
    <property type="protein sequence ID" value="FBpp0075762"/>
    <property type="gene ID" value="FBgn0004381"/>
</dbReference>
<dbReference type="EnsemblMetazoa" id="FBtr0332129">
    <property type="protein sequence ID" value="FBpp0304439"/>
    <property type="gene ID" value="FBgn0004381"/>
</dbReference>
<dbReference type="GeneID" id="39332"/>
<dbReference type="KEGG" id="dme:Dmel_CG7293"/>
<dbReference type="AGR" id="FB:FBgn0004381"/>
<dbReference type="CTD" id="39332"/>
<dbReference type="FlyBase" id="FBgn0004381">
    <property type="gene designation" value="Klp68D"/>
</dbReference>
<dbReference type="VEuPathDB" id="VectorBase:FBgn0004381"/>
<dbReference type="eggNOG" id="KOG4280">
    <property type="taxonomic scope" value="Eukaryota"/>
</dbReference>
<dbReference type="GeneTree" id="ENSGT00940000153739"/>
<dbReference type="HOGENOM" id="CLU_001485_22_4_1"/>
<dbReference type="InParanoid" id="P46867"/>
<dbReference type="OMA" id="DMIRVMK"/>
<dbReference type="OrthoDB" id="3176171at2759"/>
<dbReference type="PhylomeDB" id="P46867"/>
<dbReference type="Reactome" id="R-DME-6811434">
    <property type="pathway name" value="COPI-dependent Golgi-to-ER retrograde traffic"/>
</dbReference>
<dbReference type="Reactome" id="R-DME-983189">
    <property type="pathway name" value="Kinesins"/>
</dbReference>
<dbReference type="BioGRID-ORCS" id="39332">
    <property type="hits" value="0 hits in 3 CRISPR screens"/>
</dbReference>
<dbReference type="GenomeRNAi" id="39332"/>
<dbReference type="PRO" id="PR:P46867"/>
<dbReference type="Proteomes" id="UP000000803">
    <property type="component" value="Chromosome 3L"/>
</dbReference>
<dbReference type="Bgee" id="FBgn0004381">
    <property type="expression patterns" value="Expressed in second segment of antenna (Drosophila) and 96 other cell types or tissues"/>
</dbReference>
<dbReference type="ExpressionAtlas" id="P46867">
    <property type="expression patterns" value="baseline and differential"/>
</dbReference>
<dbReference type="GO" id="GO:1904115">
    <property type="term" value="C:axon cytoplasm"/>
    <property type="evidence" value="ECO:0007669"/>
    <property type="project" value="GOC"/>
</dbReference>
<dbReference type="GO" id="GO:0005737">
    <property type="term" value="C:cytoplasm"/>
    <property type="evidence" value="ECO:0000318"/>
    <property type="project" value="GO_Central"/>
</dbReference>
<dbReference type="GO" id="GO:0005871">
    <property type="term" value="C:kinesin complex"/>
    <property type="evidence" value="ECO:0000318"/>
    <property type="project" value="GO_Central"/>
</dbReference>
<dbReference type="GO" id="GO:0005874">
    <property type="term" value="C:microtubule"/>
    <property type="evidence" value="ECO:0000318"/>
    <property type="project" value="GO_Central"/>
</dbReference>
<dbReference type="GO" id="GO:0005875">
    <property type="term" value="C:microtubule associated complex"/>
    <property type="evidence" value="ECO:0000314"/>
    <property type="project" value="UniProtKB"/>
</dbReference>
<dbReference type="GO" id="GO:0005524">
    <property type="term" value="F:ATP binding"/>
    <property type="evidence" value="ECO:0007669"/>
    <property type="project" value="UniProtKB-KW"/>
</dbReference>
<dbReference type="GO" id="GO:0016887">
    <property type="term" value="F:ATP hydrolysis activity"/>
    <property type="evidence" value="ECO:0000318"/>
    <property type="project" value="GO_Central"/>
</dbReference>
<dbReference type="GO" id="GO:0003774">
    <property type="term" value="F:cytoskeletal motor activity"/>
    <property type="evidence" value="ECO:0000314"/>
    <property type="project" value="FlyBase"/>
</dbReference>
<dbReference type="GO" id="GO:0008017">
    <property type="term" value="F:microtubule binding"/>
    <property type="evidence" value="ECO:0000318"/>
    <property type="project" value="GO_Central"/>
</dbReference>
<dbReference type="GO" id="GO:0003777">
    <property type="term" value="F:microtubule motor activity"/>
    <property type="evidence" value="ECO:0000318"/>
    <property type="project" value="GO_Central"/>
</dbReference>
<dbReference type="GO" id="GO:0008089">
    <property type="term" value="P:anterograde axonal transport"/>
    <property type="evidence" value="ECO:0000315"/>
    <property type="project" value="FlyBase"/>
</dbReference>
<dbReference type="GO" id="GO:0030951">
    <property type="term" value="P:establishment or maintenance of microtubule cytoskeleton polarity"/>
    <property type="evidence" value="ECO:0000315"/>
    <property type="project" value="FlyBase"/>
</dbReference>
<dbReference type="GO" id="GO:0007018">
    <property type="term" value="P:microtubule-based movement"/>
    <property type="evidence" value="ECO:0000315"/>
    <property type="project" value="UniProtKB"/>
</dbReference>
<dbReference type="GO" id="GO:0007608">
    <property type="term" value="P:sensory perception of smell"/>
    <property type="evidence" value="ECO:0000315"/>
    <property type="project" value="FlyBase"/>
</dbReference>
<dbReference type="FunFam" id="3.40.850.10:FF:000029">
    <property type="entry name" value="Kinesin-like protein KIF17"/>
    <property type="match status" value="1"/>
</dbReference>
<dbReference type="Gene3D" id="3.40.850.10">
    <property type="entry name" value="Kinesin motor domain"/>
    <property type="match status" value="1"/>
</dbReference>
<dbReference type="InterPro" id="IPR027640">
    <property type="entry name" value="Kinesin-like_fam"/>
</dbReference>
<dbReference type="InterPro" id="IPR019821">
    <property type="entry name" value="Kinesin_motor_CS"/>
</dbReference>
<dbReference type="InterPro" id="IPR001752">
    <property type="entry name" value="Kinesin_motor_dom"/>
</dbReference>
<dbReference type="InterPro" id="IPR036961">
    <property type="entry name" value="Kinesin_motor_dom_sf"/>
</dbReference>
<dbReference type="InterPro" id="IPR027417">
    <property type="entry name" value="P-loop_NTPase"/>
</dbReference>
<dbReference type="PANTHER" id="PTHR47969">
    <property type="entry name" value="CHROMOSOME-ASSOCIATED KINESIN KIF4A-RELATED"/>
    <property type="match status" value="1"/>
</dbReference>
<dbReference type="PANTHER" id="PTHR47969:SF21">
    <property type="entry name" value="KINESIN-LIKE PROTEIN"/>
    <property type="match status" value="1"/>
</dbReference>
<dbReference type="Pfam" id="PF00225">
    <property type="entry name" value="Kinesin"/>
    <property type="match status" value="1"/>
</dbReference>
<dbReference type="PRINTS" id="PR00380">
    <property type="entry name" value="KINESINHEAVY"/>
</dbReference>
<dbReference type="SMART" id="SM00129">
    <property type="entry name" value="KISc"/>
    <property type="match status" value="1"/>
</dbReference>
<dbReference type="SUPFAM" id="SSF52540">
    <property type="entry name" value="P-loop containing nucleoside triphosphate hydrolases"/>
    <property type="match status" value="1"/>
</dbReference>
<dbReference type="PROSITE" id="PS00411">
    <property type="entry name" value="KINESIN_MOTOR_1"/>
    <property type="match status" value="1"/>
</dbReference>
<dbReference type="PROSITE" id="PS50067">
    <property type="entry name" value="KINESIN_MOTOR_2"/>
    <property type="match status" value="1"/>
</dbReference>
<comment type="function">
    <text evidence="4">Plus-end directed microtubule motor that may be used for anterograde axonal transport and could conceivably move cargos in fly neurons different than those moved by kinesin heavy chain or other plus-end directed motors.</text>
</comment>
<comment type="subcellular location">
    <subcellularLocation>
        <location evidence="5">Cytoplasm</location>
        <location evidence="5">Cytoskeleton</location>
    </subcellularLocation>
</comment>
<comment type="tissue specificity">
    <text evidence="4">Expressed primarily in the central nervous system and in a subset of the peripheral nervous system during embryogenesis.</text>
</comment>
<comment type="similarity">
    <text evidence="2">Belongs to the TRAFAC class myosin-kinesin ATPase superfamily. Kinesin family. Kinesin II subfamily.</text>
</comment>
<evidence type="ECO:0000255" key="1"/>
<evidence type="ECO:0000255" key="2">
    <source>
        <dbReference type="PROSITE-ProRule" id="PRU00283"/>
    </source>
</evidence>
<evidence type="ECO:0000256" key="3">
    <source>
        <dbReference type="SAM" id="MobiDB-lite"/>
    </source>
</evidence>
<evidence type="ECO:0000269" key="4">
    <source>
    </source>
</evidence>
<evidence type="ECO:0000305" key="5"/>
<name>KLP68_DROME</name>
<proteinExistence type="evidence at transcript level"/>
<feature type="chain" id="PRO_0000125392" description="Kinesin-like protein Klp68D">
    <location>
        <begin position="1"/>
        <end position="784"/>
    </location>
</feature>
<feature type="domain" description="Kinesin motor" evidence="2">
    <location>
        <begin position="19"/>
        <end position="344"/>
    </location>
</feature>
<feature type="region of interest" description="Disordered" evidence="3">
    <location>
        <begin position="371"/>
        <end position="449"/>
    </location>
</feature>
<feature type="region of interest" description="Disordered" evidence="3">
    <location>
        <begin position="605"/>
        <end position="652"/>
    </location>
</feature>
<feature type="region of interest" description="Disordered" evidence="3">
    <location>
        <begin position="742"/>
        <end position="784"/>
    </location>
</feature>
<feature type="coiled-coil region" evidence="1">
    <location>
        <begin position="351"/>
        <end position="385"/>
    </location>
</feature>
<feature type="coiled-coil region" evidence="1">
    <location>
        <begin position="426"/>
        <end position="582"/>
    </location>
</feature>
<feature type="compositionally biased region" description="Basic residues" evidence="3">
    <location>
        <begin position="386"/>
        <end position="396"/>
    </location>
</feature>
<feature type="compositionally biased region" description="Acidic residues" evidence="3">
    <location>
        <begin position="416"/>
        <end position="428"/>
    </location>
</feature>
<feature type="compositionally biased region" description="Basic and acidic residues" evidence="3">
    <location>
        <begin position="429"/>
        <end position="449"/>
    </location>
</feature>
<feature type="compositionally biased region" description="Basic residues" evidence="3">
    <location>
        <begin position="622"/>
        <end position="634"/>
    </location>
</feature>
<feature type="compositionally biased region" description="Low complexity" evidence="3">
    <location>
        <begin position="769"/>
        <end position="778"/>
    </location>
</feature>
<feature type="binding site" evidence="2">
    <location>
        <begin position="106"/>
        <end position="113"/>
    </location>
    <ligand>
        <name>ATP</name>
        <dbReference type="ChEBI" id="CHEBI:30616"/>
    </ligand>
</feature>
<feature type="sequence conflict" description="In Ref. 5; AAA28658." evidence="5" ref="5">
    <original>SS</original>
    <variation>TC</variation>
    <location>
        <begin position="220"/>
        <end position="221"/>
    </location>
</feature>
<feature type="sequence conflict" description="In Ref. 5; AAA28658." evidence="5" ref="5">
    <original>ASRAK</original>
    <variation>VRGQV</variation>
    <location>
        <begin position="338"/>
        <end position="342"/>
    </location>
</feature>
<feature type="sequence conflict" description="In Ref. 1; AAA69929." evidence="5" ref="1">
    <original>A</original>
    <variation>G</variation>
    <location>
        <position position="338"/>
    </location>
</feature>
<keyword id="KW-0067">ATP-binding</keyword>
<keyword id="KW-0175">Coiled coil</keyword>
<keyword id="KW-0963">Cytoplasm</keyword>
<keyword id="KW-0206">Cytoskeleton</keyword>
<keyword id="KW-0493">Microtubule</keyword>
<keyword id="KW-0505">Motor protein</keyword>
<keyword id="KW-0547">Nucleotide-binding</keyword>
<keyword id="KW-1185">Reference proteome</keyword>
<accession>P46867</accession>
<accession>Q961H5</accession>
<accession>Q9VTN8</accession>
<gene>
    <name type="primary">Klp68D</name>
    <name type="synonym">KLP5</name>
    <name type="ORF">CG7293</name>
</gene>
<organism>
    <name type="scientific">Drosophila melanogaster</name>
    <name type="common">Fruit fly</name>
    <dbReference type="NCBI Taxonomy" id="7227"/>
    <lineage>
        <taxon>Eukaryota</taxon>
        <taxon>Metazoa</taxon>
        <taxon>Ecdysozoa</taxon>
        <taxon>Arthropoda</taxon>
        <taxon>Hexapoda</taxon>
        <taxon>Insecta</taxon>
        <taxon>Pterygota</taxon>
        <taxon>Neoptera</taxon>
        <taxon>Endopterygota</taxon>
        <taxon>Diptera</taxon>
        <taxon>Brachycera</taxon>
        <taxon>Muscomorpha</taxon>
        <taxon>Ephydroidea</taxon>
        <taxon>Drosophilidae</taxon>
        <taxon>Drosophila</taxon>
        <taxon>Sophophora</taxon>
    </lineage>
</organism>
<sequence length="784" mass="88207">MSAKSRRPGTGSSQTPNECVQVVVRCRPMSNRERSERSPEVVNVYPNRGVVELQNVVDGNKEQRKVFTYDAAYDASATQTTLYHEVVFPLVSSVLEGFNGCIFAYGQTGTGKTFTMEGVRGNDELMGIIPRTFEQIWLHINRTENFQFLVDVSYLEIYMEELRDLLKPNSKHLEVRERGSGVYVPNLHAINCKSVEDMIKVMQVGNKNRTVGFTNMNEHSSRSHAIFMIKIEMCDTETNTIKVGKLNLIDLAGSERQSKTGASAERLKEASKINLALSSLGNVISALAESSPHVPYRDSKLTRLLQDSLGGNSKTIMIANIGPSNYNYNETLTTLRYASRAKSIQNQPIKNEDPQDAKLKEYQEEIERLKRLIGPQQQQRSEKQVTAKKQRVKKPKKETVTKEMSDSLQVSTIEQPVEDDSDPEGAESESDKENEAEVAKSNEELERERVENSKLAAKLAELEGQLVRGGKNLLDTYSERQIELEKKLVEIAERKKREIEIQQQLELQEETTLEIRERNVSLEQEVELKKRKLSKCYAKYLALQQELNDCKSDHNQDLRELEMAQNELVKELKRQLLIIDNFVPIEVKQRLYTQAKYDEEQEEWKFSSMSLPTPPGGDGKFSSKRPVSHPQRRRPTSEYALQEAKSNSPSSLRFKSENIVNYELEMPCRTTQEYRTPKVSASLQAVLAQAMQTGGDDIDIVDSHTNSLRSRLENIINANANGGAGPGAGVAVGSSIPNVRNIKSSRGLPSAASNLDSNRRPPTGRLPAKKPASAYPKARGLVNK</sequence>
<reference key="1">
    <citation type="journal article" date="1994" name="J. Cell Biol.">
        <title>Characterization of the KLP68D kinesin-like protein in Drosophila: possible roles in axonal transport.</title>
        <authorList>
            <person name="Pesavento P.A."/>
            <person name="Stewart R.J."/>
            <person name="Goldstein L.S.B."/>
        </authorList>
    </citation>
    <scope>NUCLEOTIDE SEQUENCE [MRNA]</scope>
    <scope>FUNCTION</scope>
    <scope>TISSUE SPECIFICITY</scope>
    <source>
        <tissue>Embryo</tissue>
    </source>
</reference>
<reference key="2">
    <citation type="journal article" date="2000" name="Science">
        <title>The genome sequence of Drosophila melanogaster.</title>
        <authorList>
            <person name="Adams M.D."/>
            <person name="Celniker S.E."/>
            <person name="Holt R.A."/>
            <person name="Evans C.A."/>
            <person name="Gocayne J.D."/>
            <person name="Amanatides P.G."/>
            <person name="Scherer S.E."/>
            <person name="Li P.W."/>
            <person name="Hoskins R.A."/>
            <person name="Galle R.F."/>
            <person name="George R.A."/>
            <person name="Lewis S.E."/>
            <person name="Richards S."/>
            <person name="Ashburner M."/>
            <person name="Henderson S.N."/>
            <person name="Sutton G.G."/>
            <person name="Wortman J.R."/>
            <person name="Yandell M.D."/>
            <person name="Zhang Q."/>
            <person name="Chen L.X."/>
            <person name="Brandon R.C."/>
            <person name="Rogers Y.-H.C."/>
            <person name="Blazej R.G."/>
            <person name="Champe M."/>
            <person name="Pfeiffer B.D."/>
            <person name="Wan K.H."/>
            <person name="Doyle C."/>
            <person name="Baxter E.G."/>
            <person name="Helt G."/>
            <person name="Nelson C.R."/>
            <person name="Miklos G.L.G."/>
            <person name="Abril J.F."/>
            <person name="Agbayani A."/>
            <person name="An H.-J."/>
            <person name="Andrews-Pfannkoch C."/>
            <person name="Baldwin D."/>
            <person name="Ballew R.M."/>
            <person name="Basu A."/>
            <person name="Baxendale J."/>
            <person name="Bayraktaroglu L."/>
            <person name="Beasley E.M."/>
            <person name="Beeson K.Y."/>
            <person name="Benos P.V."/>
            <person name="Berman B.P."/>
            <person name="Bhandari D."/>
            <person name="Bolshakov S."/>
            <person name="Borkova D."/>
            <person name="Botchan M.R."/>
            <person name="Bouck J."/>
            <person name="Brokstein P."/>
            <person name="Brottier P."/>
            <person name="Burtis K.C."/>
            <person name="Busam D.A."/>
            <person name="Butler H."/>
            <person name="Cadieu E."/>
            <person name="Center A."/>
            <person name="Chandra I."/>
            <person name="Cherry J.M."/>
            <person name="Cawley S."/>
            <person name="Dahlke C."/>
            <person name="Davenport L.B."/>
            <person name="Davies P."/>
            <person name="de Pablos B."/>
            <person name="Delcher A."/>
            <person name="Deng Z."/>
            <person name="Mays A.D."/>
            <person name="Dew I."/>
            <person name="Dietz S.M."/>
            <person name="Dodson K."/>
            <person name="Doup L.E."/>
            <person name="Downes M."/>
            <person name="Dugan-Rocha S."/>
            <person name="Dunkov B.C."/>
            <person name="Dunn P."/>
            <person name="Durbin K.J."/>
            <person name="Evangelista C.C."/>
            <person name="Ferraz C."/>
            <person name="Ferriera S."/>
            <person name="Fleischmann W."/>
            <person name="Fosler C."/>
            <person name="Gabrielian A.E."/>
            <person name="Garg N.S."/>
            <person name="Gelbart W.M."/>
            <person name="Glasser K."/>
            <person name="Glodek A."/>
            <person name="Gong F."/>
            <person name="Gorrell J.H."/>
            <person name="Gu Z."/>
            <person name="Guan P."/>
            <person name="Harris M."/>
            <person name="Harris N.L."/>
            <person name="Harvey D.A."/>
            <person name="Heiman T.J."/>
            <person name="Hernandez J.R."/>
            <person name="Houck J."/>
            <person name="Hostin D."/>
            <person name="Houston K.A."/>
            <person name="Howland T.J."/>
            <person name="Wei M.-H."/>
            <person name="Ibegwam C."/>
            <person name="Jalali M."/>
            <person name="Kalush F."/>
            <person name="Karpen G.H."/>
            <person name="Ke Z."/>
            <person name="Kennison J.A."/>
            <person name="Ketchum K.A."/>
            <person name="Kimmel B.E."/>
            <person name="Kodira C.D."/>
            <person name="Kraft C.L."/>
            <person name="Kravitz S."/>
            <person name="Kulp D."/>
            <person name="Lai Z."/>
            <person name="Lasko P."/>
            <person name="Lei Y."/>
            <person name="Levitsky A.A."/>
            <person name="Li J.H."/>
            <person name="Li Z."/>
            <person name="Liang Y."/>
            <person name="Lin X."/>
            <person name="Liu X."/>
            <person name="Mattei B."/>
            <person name="McIntosh T.C."/>
            <person name="McLeod M.P."/>
            <person name="McPherson D."/>
            <person name="Merkulov G."/>
            <person name="Milshina N.V."/>
            <person name="Mobarry C."/>
            <person name="Morris J."/>
            <person name="Moshrefi A."/>
            <person name="Mount S.M."/>
            <person name="Moy M."/>
            <person name="Murphy B."/>
            <person name="Murphy L."/>
            <person name="Muzny D.M."/>
            <person name="Nelson D.L."/>
            <person name="Nelson D.R."/>
            <person name="Nelson K.A."/>
            <person name="Nixon K."/>
            <person name="Nusskern D.R."/>
            <person name="Pacleb J.M."/>
            <person name="Palazzolo M."/>
            <person name="Pittman G.S."/>
            <person name="Pan S."/>
            <person name="Pollard J."/>
            <person name="Puri V."/>
            <person name="Reese M.G."/>
            <person name="Reinert K."/>
            <person name="Remington K."/>
            <person name="Saunders R.D.C."/>
            <person name="Scheeler F."/>
            <person name="Shen H."/>
            <person name="Shue B.C."/>
            <person name="Siden-Kiamos I."/>
            <person name="Simpson M."/>
            <person name="Skupski M.P."/>
            <person name="Smith T.J."/>
            <person name="Spier E."/>
            <person name="Spradling A.C."/>
            <person name="Stapleton M."/>
            <person name="Strong R."/>
            <person name="Sun E."/>
            <person name="Svirskas R."/>
            <person name="Tector C."/>
            <person name="Turner R."/>
            <person name="Venter E."/>
            <person name="Wang A.H."/>
            <person name="Wang X."/>
            <person name="Wang Z.-Y."/>
            <person name="Wassarman D.A."/>
            <person name="Weinstock G.M."/>
            <person name="Weissenbach J."/>
            <person name="Williams S.M."/>
            <person name="Woodage T."/>
            <person name="Worley K.C."/>
            <person name="Wu D."/>
            <person name="Yang S."/>
            <person name="Yao Q.A."/>
            <person name="Ye J."/>
            <person name="Yeh R.-F."/>
            <person name="Zaveri J.S."/>
            <person name="Zhan M."/>
            <person name="Zhang G."/>
            <person name="Zhao Q."/>
            <person name="Zheng L."/>
            <person name="Zheng X.H."/>
            <person name="Zhong F.N."/>
            <person name="Zhong W."/>
            <person name="Zhou X."/>
            <person name="Zhu S.C."/>
            <person name="Zhu X."/>
            <person name="Smith H.O."/>
            <person name="Gibbs R.A."/>
            <person name="Myers E.W."/>
            <person name="Rubin G.M."/>
            <person name="Venter J.C."/>
        </authorList>
    </citation>
    <scope>NUCLEOTIDE SEQUENCE [LARGE SCALE GENOMIC DNA]</scope>
    <source>
        <strain>Berkeley</strain>
    </source>
</reference>
<reference key="3">
    <citation type="journal article" date="2002" name="Genome Biol.">
        <title>Annotation of the Drosophila melanogaster euchromatic genome: a systematic review.</title>
        <authorList>
            <person name="Misra S."/>
            <person name="Crosby M.A."/>
            <person name="Mungall C.J."/>
            <person name="Matthews B.B."/>
            <person name="Campbell K.S."/>
            <person name="Hradecky P."/>
            <person name="Huang Y."/>
            <person name="Kaminker J.S."/>
            <person name="Millburn G.H."/>
            <person name="Prochnik S.E."/>
            <person name="Smith C.D."/>
            <person name="Tupy J.L."/>
            <person name="Whitfield E.J."/>
            <person name="Bayraktaroglu L."/>
            <person name="Berman B.P."/>
            <person name="Bettencourt B.R."/>
            <person name="Celniker S.E."/>
            <person name="de Grey A.D.N.J."/>
            <person name="Drysdale R.A."/>
            <person name="Harris N.L."/>
            <person name="Richter J."/>
            <person name="Russo S."/>
            <person name="Schroeder A.J."/>
            <person name="Shu S.Q."/>
            <person name="Stapleton M."/>
            <person name="Yamada C."/>
            <person name="Ashburner M."/>
            <person name="Gelbart W.M."/>
            <person name="Rubin G.M."/>
            <person name="Lewis S.E."/>
        </authorList>
    </citation>
    <scope>GENOME REANNOTATION</scope>
    <source>
        <strain>Berkeley</strain>
    </source>
</reference>
<reference key="4">
    <citation type="journal article" date="2002" name="Genome Biol.">
        <title>A Drosophila full-length cDNA resource.</title>
        <authorList>
            <person name="Stapleton M."/>
            <person name="Carlson J.W."/>
            <person name="Brokstein P."/>
            <person name="Yu C."/>
            <person name="Champe M."/>
            <person name="George R.A."/>
            <person name="Guarin H."/>
            <person name="Kronmiller B."/>
            <person name="Pacleb J.M."/>
            <person name="Park S."/>
            <person name="Wan K.H."/>
            <person name="Rubin G.M."/>
            <person name="Celniker S.E."/>
        </authorList>
    </citation>
    <scope>NUCLEOTIDE SEQUENCE [LARGE SCALE MRNA]</scope>
    <source>
        <strain>Berkeley</strain>
        <tissue>Head</tissue>
    </source>
</reference>
<reference key="5">
    <citation type="journal article" date="1991" name="Proc. Natl. Acad. Sci. U.S.A.">
        <title>Identification and partial characterization of six members of the kinesin superfamily in Drosophila.</title>
        <authorList>
            <person name="Stewart R.J."/>
            <person name="Pesavento P.A."/>
            <person name="Woerpel D.N."/>
            <person name="Goldstein L.S.B."/>
        </authorList>
    </citation>
    <scope>NUCLEOTIDE SEQUENCE [GENOMIC DNA] OF 220-342</scope>
    <source>
        <strain>DP CN BW</strain>
    </source>
</reference>
<protein>
    <recommendedName>
        <fullName>Kinesin-like protein Klp68D</fullName>
    </recommendedName>
</protein>